<proteinExistence type="inferred from homology"/>
<dbReference type="EMBL" id="AF102543">
    <property type="protein sequence ID" value="AAD19407.1"/>
    <property type="molecule type" value="Genomic_DNA"/>
</dbReference>
<dbReference type="EMBL" id="AE008692">
    <property type="protein sequence ID" value="AAV90380.1"/>
    <property type="molecule type" value="Genomic_DNA"/>
</dbReference>
<dbReference type="SMR" id="Q9Z670"/>
<dbReference type="STRING" id="264203.ZMO1756"/>
<dbReference type="KEGG" id="zmo:ZMO1756"/>
<dbReference type="eggNOG" id="COG2610">
    <property type="taxonomic scope" value="Bacteria"/>
</dbReference>
<dbReference type="HOGENOM" id="CLU_027949_0_0_5"/>
<dbReference type="UniPathway" id="UPA00792"/>
<dbReference type="Proteomes" id="UP000001173">
    <property type="component" value="Chromosome"/>
</dbReference>
<dbReference type="GO" id="GO:0005886">
    <property type="term" value="C:plasma membrane"/>
    <property type="evidence" value="ECO:0007669"/>
    <property type="project" value="UniProtKB-SubCell"/>
</dbReference>
<dbReference type="GO" id="GO:0015128">
    <property type="term" value="F:gluconate transmembrane transporter activity"/>
    <property type="evidence" value="ECO:0007669"/>
    <property type="project" value="InterPro"/>
</dbReference>
<dbReference type="GO" id="GO:0019521">
    <property type="term" value="P:D-gluconate metabolic process"/>
    <property type="evidence" value="ECO:0007669"/>
    <property type="project" value="UniProtKB-KW"/>
</dbReference>
<dbReference type="InterPro" id="IPR003474">
    <property type="entry name" value="Glcn_transporter"/>
</dbReference>
<dbReference type="NCBIfam" id="TIGR00791">
    <property type="entry name" value="gntP"/>
    <property type="match status" value="1"/>
</dbReference>
<dbReference type="PANTHER" id="PTHR30354">
    <property type="entry name" value="GNT FAMILY GLUCONATE TRANSPORTER"/>
    <property type="match status" value="1"/>
</dbReference>
<dbReference type="PANTHER" id="PTHR30354:SF26">
    <property type="entry name" value="TRANSPORTER, PUTATIVE-RELATED"/>
    <property type="match status" value="1"/>
</dbReference>
<dbReference type="Pfam" id="PF02447">
    <property type="entry name" value="GntP_permease"/>
    <property type="match status" value="1"/>
</dbReference>
<dbReference type="PIRSF" id="PIRSF002746">
    <property type="entry name" value="Gluconate_transporter"/>
    <property type="match status" value="1"/>
</dbReference>
<comment type="pathway">
    <text>Carbohydrate acid metabolism; D-gluconate degradation.</text>
</comment>
<comment type="subcellular location">
    <subcellularLocation>
        <location evidence="2">Cell membrane</location>
        <topology evidence="2">Multi-pass membrane protein</topology>
    </subcellularLocation>
</comment>
<comment type="similarity">
    <text evidence="2">Belongs to the GntP permease family.</text>
</comment>
<protein>
    <recommendedName>
        <fullName>Gluconate permease</fullName>
    </recommendedName>
</protein>
<keyword id="KW-1003">Cell membrane</keyword>
<keyword id="KW-0311">Gluconate utilization</keyword>
<keyword id="KW-0472">Membrane</keyword>
<keyword id="KW-1185">Reference proteome</keyword>
<keyword id="KW-0762">Sugar transport</keyword>
<keyword id="KW-0812">Transmembrane</keyword>
<keyword id="KW-1133">Transmembrane helix</keyword>
<keyword id="KW-0813">Transport</keyword>
<organism>
    <name type="scientific">Zymomonas mobilis subsp. mobilis (strain ATCC 31821 / ZM4 / CP4)</name>
    <dbReference type="NCBI Taxonomy" id="264203"/>
    <lineage>
        <taxon>Bacteria</taxon>
        <taxon>Pseudomonadati</taxon>
        <taxon>Pseudomonadota</taxon>
        <taxon>Alphaproteobacteria</taxon>
        <taxon>Sphingomonadales</taxon>
        <taxon>Zymomonadaceae</taxon>
        <taxon>Zymomonas</taxon>
    </lineage>
</organism>
<feature type="chain" id="PRO_0000061942" description="Gluconate permease">
    <location>
        <begin position="1"/>
        <end position="451"/>
    </location>
</feature>
<feature type="transmembrane region" description="Helical" evidence="1">
    <location>
        <begin position="4"/>
        <end position="24"/>
    </location>
</feature>
<feature type="transmembrane region" description="Helical" evidence="1">
    <location>
        <begin position="30"/>
        <end position="50"/>
    </location>
</feature>
<feature type="transmembrane region" description="Helical" evidence="1">
    <location>
        <begin position="62"/>
        <end position="82"/>
    </location>
</feature>
<feature type="transmembrane region" description="Helical" evidence="1">
    <location>
        <begin position="108"/>
        <end position="128"/>
    </location>
</feature>
<feature type="transmembrane region" description="Helical" evidence="1">
    <location>
        <begin position="140"/>
        <end position="160"/>
    </location>
</feature>
<feature type="transmembrane region" description="Helical" evidence="1">
    <location>
        <begin position="180"/>
        <end position="200"/>
    </location>
</feature>
<feature type="transmembrane region" description="Helical" evidence="1">
    <location>
        <begin position="229"/>
        <end position="249"/>
    </location>
</feature>
<feature type="transmembrane region" description="Helical" evidence="1">
    <location>
        <begin position="270"/>
        <end position="290"/>
    </location>
</feature>
<feature type="transmembrane region" description="Helical" evidence="1">
    <location>
        <begin position="306"/>
        <end position="326"/>
    </location>
</feature>
<feature type="transmembrane region" description="Helical" evidence="1">
    <location>
        <begin position="337"/>
        <end position="357"/>
    </location>
</feature>
<feature type="transmembrane region" description="Helical" evidence="1">
    <location>
        <begin position="375"/>
        <end position="395"/>
    </location>
</feature>
<feature type="transmembrane region" description="Helical" evidence="1">
    <location>
        <begin position="430"/>
        <end position="450"/>
    </location>
</feature>
<name>GNTP_ZYMMO</name>
<accession>Q9Z670</accession>
<accession>Q5NLN0</accession>
<gene>
    <name type="primary">gntP</name>
    <name type="ordered locus">ZMO1756</name>
</gene>
<reference key="1">
    <citation type="submission" date="1998-10" db="EMBL/GenBank/DDBJ databases">
        <authorList>
            <person name="Um H.W."/>
            <person name="Kang H.S."/>
        </authorList>
    </citation>
    <scope>NUCLEOTIDE SEQUENCE [GENOMIC DNA]</scope>
    <source>
        <strain>ATCC 31821 / ZM4 / CP4</strain>
    </source>
</reference>
<reference key="2">
    <citation type="journal article" date="2005" name="Nat. Biotechnol.">
        <title>The genome sequence of the ethanologenic bacterium Zymomonas mobilis ZM4.</title>
        <authorList>
            <person name="Seo J.-S."/>
            <person name="Chong H."/>
            <person name="Park H.S."/>
            <person name="Yoon K.-O."/>
            <person name="Jung C."/>
            <person name="Kim J.J."/>
            <person name="Hong J.H."/>
            <person name="Kim H."/>
            <person name="Kim J.-H."/>
            <person name="Kil J.-I."/>
            <person name="Park C.J."/>
            <person name="Oh H.-M."/>
            <person name="Lee J.-S."/>
            <person name="Jin S.-J."/>
            <person name="Um H.-W."/>
            <person name="Lee H.-J."/>
            <person name="Oh S.-J."/>
            <person name="Kim J.Y."/>
            <person name="Kang H.L."/>
            <person name="Lee S.Y."/>
            <person name="Lee K.J."/>
            <person name="Kang H.S."/>
        </authorList>
    </citation>
    <scope>NUCLEOTIDE SEQUENCE [LARGE SCALE GENOMIC DNA]</scope>
    <source>
        <strain>ATCC 31821 / ZM4 / CP4</strain>
    </source>
</reference>
<sequence>MHSNGTMLLLYALASIIILILMIAKWRLNPFVSLILVSIGMGAVTGMPLTKVLSAFQDGLGSGIGSTASVIALGTMLGKILAESGGAERIATTTIKIFGPKLIHWAMLVIAFIVGIPIFYQVGFILLIPLVFTLGRASGISLVKLTIPLCAGLATVHGLLPPHPGSMQCVEMLHADVGKTILYGFIVGFPAAILAGPLYGNWITPRIQLPAHNPFAESLEGSSDQDKNLPGFWLTIFSILLPVLLMVFSSGANIFLPHGNNIRAFMNFMGDPVVSLLIALLVSMVTLGFWRGFSSADLLKFTNDCLGPTAGILLLIGAGGGFSEILYRAGVSNAMADLSHVMHLSPIMLGFIIAAVIRVATGSQTVAMSMSGGMLAPIIFSTPGFHSPELLVLSIGAGSSILSHVNDGAFWLLKEYLNMTVSQTFKTWTVSVTIASIAALILTFGLQALGL</sequence>
<evidence type="ECO:0000255" key="1"/>
<evidence type="ECO:0000305" key="2"/>